<proteinExistence type="inferred from homology"/>
<reference key="1">
    <citation type="journal article" date="2003" name="Nat. Genet.">
        <title>Comparative analysis of the genome sequences of Bordetella pertussis, Bordetella parapertussis and Bordetella bronchiseptica.</title>
        <authorList>
            <person name="Parkhill J."/>
            <person name="Sebaihia M."/>
            <person name="Preston A."/>
            <person name="Murphy L.D."/>
            <person name="Thomson N.R."/>
            <person name="Harris D.E."/>
            <person name="Holden M.T.G."/>
            <person name="Churcher C.M."/>
            <person name="Bentley S.D."/>
            <person name="Mungall K.L."/>
            <person name="Cerdeno-Tarraga A.-M."/>
            <person name="Temple L."/>
            <person name="James K.D."/>
            <person name="Harris B."/>
            <person name="Quail M.A."/>
            <person name="Achtman M."/>
            <person name="Atkin R."/>
            <person name="Baker S."/>
            <person name="Basham D."/>
            <person name="Bason N."/>
            <person name="Cherevach I."/>
            <person name="Chillingworth T."/>
            <person name="Collins M."/>
            <person name="Cronin A."/>
            <person name="Davis P."/>
            <person name="Doggett J."/>
            <person name="Feltwell T."/>
            <person name="Goble A."/>
            <person name="Hamlin N."/>
            <person name="Hauser H."/>
            <person name="Holroyd S."/>
            <person name="Jagels K."/>
            <person name="Leather S."/>
            <person name="Moule S."/>
            <person name="Norberczak H."/>
            <person name="O'Neil S."/>
            <person name="Ormond D."/>
            <person name="Price C."/>
            <person name="Rabbinowitsch E."/>
            <person name="Rutter S."/>
            <person name="Sanders M."/>
            <person name="Saunders D."/>
            <person name="Seeger K."/>
            <person name="Sharp S."/>
            <person name="Simmonds M."/>
            <person name="Skelton J."/>
            <person name="Squares R."/>
            <person name="Squares S."/>
            <person name="Stevens K."/>
            <person name="Unwin L."/>
            <person name="Whitehead S."/>
            <person name="Barrell B.G."/>
            <person name="Maskell D.J."/>
        </authorList>
    </citation>
    <scope>NUCLEOTIDE SEQUENCE [LARGE SCALE GENOMIC DNA]</scope>
    <source>
        <strain>Tohama I / ATCC BAA-589 / NCTC 13251</strain>
    </source>
</reference>
<sequence>MKIHEYQGKELLKQFGVTVPRGIPAFSVDEAVAAAEKLGGPVWVVKAQIHAGGRGKGGGVKLGRSIDEVRQLSSEILGMQLVTHQTGPQGQKVRRLLIEEGADIKKEYYVGIVTDRGTQRVCVMASSEGGMDIEEVAAHSPEKILKVFVDPAAGLTDAEAAELARGIGVPEASVGKAAAEFQKLYKAYWDTDASLAEINPLILTGSGDIIALDAKFNFDSNALFRHPEIVAYRDLDEEDPAEIEASKFDLAYIQLDGNIGCLVNGAGLAMATMDTIKLFGGEPANFLDVGGGATAEKVTEAFKIMLKNKSVKAILVNIFGGIMRCDVIAEGVITACKAVNLNVPLVVRMKGTNEELGKKMLAESGLPIISADTMAEAATKVVAAVK</sequence>
<feature type="chain" id="PRO_1000082027" description="Succinate--CoA ligase [ADP-forming] subunit beta">
    <location>
        <begin position="1"/>
        <end position="386"/>
    </location>
</feature>
<feature type="domain" description="ATP-grasp" evidence="1">
    <location>
        <begin position="9"/>
        <end position="244"/>
    </location>
</feature>
<feature type="binding site" evidence="1">
    <location>
        <position position="46"/>
    </location>
    <ligand>
        <name>ATP</name>
        <dbReference type="ChEBI" id="CHEBI:30616"/>
    </ligand>
</feature>
<feature type="binding site" evidence="1">
    <location>
        <begin position="53"/>
        <end position="55"/>
    </location>
    <ligand>
        <name>ATP</name>
        <dbReference type="ChEBI" id="CHEBI:30616"/>
    </ligand>
</feature>
<feature type="binding site" evidence="1">
    <location>
        <position position="99"/>
    </location>
    <ligand>
        <name>ATP</name>
        <dbReference type="ChEBI" id="CHEBI:30616"/>
    </ligand>
</feature>
<feature type="binding site" evidence="1">
    <location>
        <position position="102"/>
    </location>
    <ligand>
        <name>ATP</name>
        <dbReference type="ChEBI" id="CHEBI:30616"/>
    </ligand>
</feature>
<feature type="binding site" evidence="1">
    <location>
        <position position="107"/>
    </location>
    <ligand>
        <name>ATP</name>
        <dbReference type="ChEBI" id="CHEBI:30616"/>
    </ligand>
</feature>
<feature type="binding site" evidence="1">
    <location>
        <position position="199"/>
    </location>
    <ligand>
        <name>Mg(2+)</name>
        <dbReference type="ChEBI" id="CHEBI:18420"/>
    </ligand>
</feature>
<feature type="binding site" evidence="1">
    <location>
        <position position="213"/>
    </location>
    <ligand>
        <name>Mg(2+)</name>
        <dbReference type="ChEBI" id="CHEBI:18420"/>
    </ligand>
</feature>
<feature type="binding site" evidence="1">
    <location>
        <position position="264"/>
    </location>
    <ligand>
        <name>substrate</name>
        <note>ligand shared with subunit alpha</note>
    </ligand>
</feature>
<feature type="binding site" evidence="1">
    <location>
        <begin position="321"/>
        <end position="323"/>
    </location>
    <ligand>
        <name>substrate</name>
        <note>ligand shared with subunit alpha</note>
    </ligand>
</feature>
<gene>
    <name evidence="1" type="primary">sucC</name>
    <name type="ordered locus">BP2541</name>
</gene>
<name>SUCC_BORPE</name>
<comment type="function">
    <text evidence="1">Succinyl-CoA synthetase functions in the citric acid cycle (TCA), coupling the hydrolysis of succinyl-CoA to the synthesis of either ATP or GTP and thus represents the only step of substrate-level phosphorylation in the TCA. The beta subunit provides nucleotide specificity of the enzyme and binds the substrate succinate, while the binding sites for coenzyme A and phosphate are found in the alpha subunit.</text>
</comment>
<comment type="catalytic activity">
    <reaction evidence="1">
        <text>succinate + ATP + CoA = succinyl-CoA + ADP + phosphate</text>
        <dbReference type="Rhea" id="RHEA:17661"/>
        <dbReference type="ChEBI" id="CHEBI:30031"/>
        <dbReference type="ChEBI" id="CHEBI:30616"/>
        <dbReference type="ChEBI" id="CHEBI:43474"/>
        <dbReference type="ChEBI" id="CHEBI:57287"/>
        <dbReference type="ChEBI" id="CHEBI:57292"/>
        <dbReference type="ChEBI" id="CHEBI:456216"/>
        <dbReference type="EC" id="6.2.1.5"/>
    </reaction>
    <physiologicalReaction direction="right-to-left" evidence="1">
        <dbReference type="Rhea" id="RHEA:17663"/>
    </physiologicalReaction>
</comment>
<comment type="catalytic activity">
    <reaction evidence="1">
        <text>GTP + succinate + CoA = succinyl-CoA + GDP + phosphate</text>
        <dbReference type="Rhea" id="RHEA:22120"/>
        <dbReference type="ChEBI" id="CHEBI:30031"/>
        <dbReference type="ChEBI" id="CHEBI:37565"/>
        <dbReference type="ChEBI" id="CHEBI:43474"/>
        <dbReference type="ChEBI" id="CHEBI:57287"/>
        <dbReference type="ChEBI" id="CHEBI:57292"/>
        <dbReference type="ChEBI" id="CHEBI:58189"/>
    </reaction>
    <physiologicalReaction direction="right-to-left" evidence="1">
        <dbReference type="Rhea" id="RHEA:22122"/>
    </physiologicalReaction>
</comment>
<comment type="cofactor">
    <cofactor evidence="1">
        <name>Mg(2+)</name>
        <dbReference type="ChEBI" id="CHEBI:18420"/>
    </cofactor>
    <text evidence="1">Binds 1 Mg(2+) ion per subunit.</text>
</comment>
<comment type="pathway">
    <text evidence="1">Carbohydrate metabolism; tricarboxylic acid cycle; succinate from succinyl-CoA (ligase route): step 1/1.</text>
</comment>
<comment type="subunit">
    <text evidence="1">Heterotetramer of two alpha and two beta subunits.</text>
</comment>
<comment type="similarity">
    <text evidence="1">Belongs to the succinate/malate CoA ligase beta subunit family.</text>
</comment>
<dbReference type="EC" id="6.2.1.5" evidence="1"/>
<dbReference type="EMBL" id="BX640418">
    <property type="protein sequence ID" value="CAE42816.1"/>
    <property type="molecule type" value="Genomic_DNA"/>
</dbReference>
<dbReference type="RefSeq" id="NP_881168.1">
    <property type="nucleotide sequence ID" value="NC_002929.2"/>
</dbReference>
<dbReference type="RefSeq" id="WP_003812749.1">
    <property type="nucleotide sequence ID" value="NZ_CP039022.1"/>
</dbReference>
<dbReference type="SMR" id="Q7VVU5"/>
<dbReference type="STRING" id="257313.BP2541"/>
<dbReference type="PaxDb" id="257313-BP2541"/>
<dbReference type="GeneID" id="93204423"/>
<dbReference type="KEGG" id="bpe:BP2541"/>
<dbReference type="PATRIC" id="fig|257313.5.peg.2741"/>
<dbReference type="eggNOG" id="COG0045">
    <property type="taxonomic scope" value="Bacteria"/>
</dbReference>
<dbReference type="HOGENOM" id="CLU_037430_0_2_4"/>
<dbReference type="UniPathway" id="UPA00223">
    <property type="reaction ID" value="UER00999"/>
</dbReference>
<dbReference type="Proteomes" id="UP000002676">
    <property type="component" value="Chromosome"/>
</dbReference>
<dbReference type="GO" id="GO:0005829">
    <property type="term" value="C:cytosol"/>
    <property type="evidence" value="ECO:0007669"/>
    <property type="project" value="TreeGrafter"/>
</dbReference>
<dbReference type="GO" id="GO:0042709">
    <property type="term" value="C:succinate-CoA ligase complex"/>
    <property type="evidence" value="ECO:0007669"/>
    <property type="project" value="TreeGrafter"/>
</dbReference>
<dbReference type="GO" id="GO:0005524">
    <property type="term" value="F:ATP binding"/>
    <property type="evidence" value="ECO:0007669"/>
    <property type="project" value="UniProtKB-UniRule"/>
</dbReference>
<dbReference type="GO" id="GO:0000287">
    <property type="term" value="F:magnesium ion binding"/>
    <property type="evidence" value="ECO:0007669"/>
    <property type="project" value="UniProtKB-UniRule"/>
</dbReference>
<dbReference type="GO" id="GO:0004775">
    <property type="term" value="F:succinate-CoA ligase (ADP-forming) activity"/>
    <property type="evidence" value="ECO:0007669"/>
    <property type="project" value="UniProtKB-UniRule"/>
</dbReference>
<dbReference type="GO" id="GO:0004776">
    <property type="term" value="F:succinate-CoA ligase (GDP-forming) activity"/>
    <property type="evidence" value="ECO:0007669"/>
    <property type="project" value="RHEA"/>
</dbReference>
<dbReference type="GO" id="GO:0006104">
    <property type="term" value="P:succinyl-CoA metabolic process"/>
    <property type="evidence" value="ECO:0007669"/>
    <property type="project" value="TreeGrafter"/>
</dbReference>
<dbReference type="GO" id="GO:0006099">
    <property type="term" value="P:tricarboxylic acid cycle"/>
    <property type="evidence" value="ECO:0007669"/>
    <property type="project" value="UniProtKB-UniRule"/>
</dbReference>
<dbReference type="FunFam" id="3.30.1490.20:FF:000002">
    <property type="entry name" value="Succinate--CoA ligase [ADP-forming] subunit beta"/>
    <property type="match status" value="1"/>
</dbReference>
<dbReference type="FunFam" id="3.30.470.20:FF:000002">
    <property type="entry name" value="Succinate--CoA ligase [ADP-forming] subunit beta"/>
    <property type="match status" value="1"/>
</dbReference>
<dbReference type="FunFam" id="3.40.50.261:FF:000001">
    <property type="entry name" value="Succinate--CoA ligase [ADP-forming] subunit beta"/>
    <property type="match status" value="1"/>
</dbReference>
<dbReference type="Gene3D" id="3.30.1490.20">
    <property type="entry name" value="ATP-grasp fold, A domain"/>
    <property type="match status" value="1"/>
</dbReference>
<dbReference type="Gene3D" id="3.30.470.20">
    <property type="entry name" value="ATP-grasp fold, B domain"/>
    <property type="match status" value="1"/>
</dbReference>
<dbReference type="Gene3D" id="3.40.50.261">
    <property type="entry name" value="Succinyl-CoA synthetase domains"/>
    <property type="match status" value="1"/>
</dbReference>
<dbReference type="HAMAP" id="MF_00558">
    <property type="entry name" value="Succ_CoA_beta"/>
    <property type="match status" value="1"/>
</dbReference>
<dbReference type="InterPro" id="IPR011761">
    <property type="entry name" value="ATP-grasp"/>
</dbReference>
<dbReference type="InterPro" id="IPR013650">
    <property type="entry name" value="ATP-grasp_succ-CoA_synth-type"/>
</dbReference>
<dbReference type="InterPro" id="IPR013815">
    <property type="entry name" value="ATP_grasp_subdomain_1"/>
</dbReference>
<dbReference type="InterPro" id="IPR017866">
    <property type="entry name" value="Succ-CoA_synthase_bsu_CS"/>
</dbReference>
<dbReference type="InterPro" id="IPR005811">
    <property type="entry name" value="SUCC_ACL_C"/>
</dbReference>
<dbReference type="InterPro" id="IPR005809">
    <property type="entry name" value="Succ_CoA_ligase-like_bsu"/>
</dbReference>
<dbReference type="InterPro" id="IPR016102">
    <property type="entry name" value="Succinyl-CoA_synth-like"/>
</dbReference>
<dbReference type="NCBIfam" id="NF001913">
    <property type="entry name" value="PRK00696.1"/>
    <property type="match status" value="1"/>
</dbReference>
<dbReference type="NCBIfam" id="TIGR01016">
    <property type="entry name" value="sucCoAbeta"/>
    <property type="match status" value="1"/>
</dbReference>
<dbReference type="PANTHER" id="PTHR11815:SF10">
    <property type="entry name" value="SUCCINATE--COA LIGASE [GDP-FORMING] SUBUNIT BETA, MITOCHONDRIAL"/>
    <property type="match status" value="1"/>
</dbReference>
<dbReference type="PANTHER" id="PTHR11815">
    <property type="entry name" value="SUCCINYL-COA SYNTHETASE BETA CHAIN"/>
    <property type="match status" value="1"/>
</dbReference>
<dbReference type="Pfam" id="PF08442">
    <property type="entry name" value="ATP-grasp_2"/>
    <property type="match status" value="1"/>
</dbReference>
<dbReference type="Pfam" id="PF00549">
    <property type="entry name" value="Ligase_CoA"/>
    <property type="match status" value="1"/>
</dbReference>
<dbReference type="PIRSF" id="PIRSF001554">
    <property type="entry name" value="SucCS_beta"/>
    <property type="match status" value="1"/>
</dbReference>
<dbReference type="SUPFAM" id="SSF56059">
    <property type="entry name" value="Glutathione synthetase ATP-binding domain-like"/>
    <property type="match status" value="1"/>
</dbReference>
<dbReference type="SUPFAM" id="SSF52210">
    <property type="entry name" value="Succinyl-CoA synthetase domains"/>
    <property type="match status" value="1"/>
</dbReference>
<dbReference type="PROSITE" id="PS50975">
    <property type="entry name" value="ATP_GRASP"/>
    <property type="match status" value="1"/>
</dbReference>
<dbReference type="PROSITE" id="PS01217">
    <property type="entry name" value="SUCCINYL_COA_LIG_3"/>
    <property type="match status" value="1"/>
</dbReference>
<evidence type="ECO:0000255" key="1">
    <source>
        <dbReference type="HAMAP-Rule" id="MF_00558"/>
    </source>
</evidence>
<accession>Q7VVU5</accession>
<keyword id="KW-0067">ATP-binding</keyword>
<keyword id="KW-0436">Ligase</keyword>
<keyword id="KW-0460">Magnesium</keyword>
<keyword id="KW-0479">Metal-binding</keyword>
<keyword id="KW-0547">Nucleotide-binding</keyword>
<keyword id="KW-1185">Reference proteome</keyword>
<keyword id="KW-0816">Tricarboxylic acid cycle</keyword>
<organism>
    <name type="scientific">Bordetella pertussis (strain Tohama I / ATCC BAA-589 / NCTC 13251)</name>
    <dbReference type="NCBI Taxonomy" id="257313"/>
    <lineage>
        <taxon>Bacteria</taxon>
        <taxon>Pseudomonadati</taxon>
        <taxon>Pseudomonadota</taxon>
        <taxon>Betaproteobacteria</taxon>
        <taxon>Burkholderiales</taxon>
        <taxon>Alcaligenaceae</taxon>
        <taxon>Bordetella</taxon>
    </lineage>
</organism>
<protein>
    <recommendedName>
        <fullName evidence="1">Succinate--CoA ligase [ADP-forming] subunit beta</fullName>
        <ecNumber evidence="1">6.2.1.5</ecNumber>
    </recommendedName>
    <alternativeName>
        <fullName evidence="1">Succinyl-CoA synthetase subunit beta</fullName>
        <shortName evidence="1">SCS-beta</shortName>
    </alternativeName>
</protein>